<evidence type="ECO:0000312" key="1">
    <source>
        <dbReference type="WormBase" id="Y116A8C.11"/>
    </source>
</evidence>
<organism>
    <name type="scientific">Caenorhabditis elegans</name>
    <dbReference type="NCBI Taxonomy" id="6239"/>
    <lineage>
        <taxon>Eukaryota</taxon>
        <taxon>Metazoa</taxon>
        <taxon>Ecdysozoa</taxon>
        <taxon>Nematoda</taxon>
        <taxon>Chromadorea</taxon>
        <taxon>Rhabditida</taxon>
        <taxon>Rhabditina</taxon>
        <taxon>Rhabditomorpha</taxon>
        <taxon>Rhabditoidea</taxon>
        <taxon>Rhabditidae</taxon>
        <taxon>Peloderinae</taxon>
        <taxon>Caenorhabditis</taxon>
    </lineage>
</organism>
<proteinExistence type="predicted"/>
<protein>
    <recommendedName>
        <fullName evidence="1">Nhr-229 coiled coil domain containing nccd-1</fullName>
    </recommendedName>
</protein>
<gene>
    <name evidence="1" type="primary">nccd-1</name>
    <name evidence="1" type="ORF">Y116A8C.11</name>
</gene>
<keyword id="KW-1185">Reference proteome</keyword>
<sequence>MESKQPEDIHQDCELKQDELISKLQHSQQNFDNIKKILANFEKENENLADENEILKTRIASLEKDVKQEKNATKMAKSLNEETINELTLSEDLIESLKKQFQASKIELKEEILSKNKVEKDYSNDKRYFLEREQYLLITMESMESGKLEHEQQTEIMNKDVEELKIRVKELEATDLSEKNIELERQVGKLTAQLQDFESSRGYEQELILSQLEVQKRKLDKQLIDLQSKLERNPELVEFDKLHEELQTERMNMPVQVCYVHVSFIHKDIENLIYRKMNNNK</sequence>
<dbReference type="EMBL" id="AL117204">
    <property type="protein sequence ID" value="CAB55144.1"/>
    <property type="molecule type" value="Genomic_DNA"/>
</dbReference>
<dbReference type="PIR" id="T31510">
    <property type="entry name" value="T31510"/>
</dbReference>
<dbReference type="SMR" id="Q9U2T3"/>
<dbReference type="FunCoup" id="Q9U2T3">
    <property type="interactions" value="94"/>
</dbReference>
<dbReference type="STRING" id="6239.Y116A8C.11.1"/>
<dbReference type="PaxDb" id="6239-Y116A8C.11"/>
<dbReference type="EnsemblMetazoa" id="Y116A8C.11.1">
    <property type="protein sequence ID" value="Y116A8C.11.1"/>
    <property type="gene ID" value="WBGene00013791"/>
</dbReference>
<dbReference type="KEGG" id="cel:CELE_Y116A8C.11"/>
<dbReference type="UCSC" id="Y116A8C.11">
    <property type="organism name" value="c. elegans"/>
</dbReference>
<dbReference type="AGR" id="WB:WBGene00013791"/>
<dbReference type="CTD" id="190998"/>
<dbReference type="WormBase" id="Y116A8C.11">
    <property type="protein sequence ID" value="CE23322"/>
    <property type="gene ID" value="WBGene00013791"/>
    <property type="gene designation" value="nccd-1"/>
</dbReference>
<dbReference type="GeneTree" id="ENSGT00970000197332"/>
<dbReference type="HOGENOM" id="CLU_991213_0_0_1"/>
<dbReference type="InParanoid" id="Q9U2T3"/>
<dbReference type="PhylomeDB" id="Q9U2T3"/>
<dbReference type="PRO" id="PR:Q9U2T3"/>
<dbReference type="Proteomes" id="UP000001940">
    <property type="component" value="Chromosome IV"/>
</dbReference>
<dbReference type="Bgee" id="WBGene00013791">
    <property type="expression patterns" value="Expressed in adult organism"/>
</dbReference>
<feature type="chain" id="PRO_0000065492" description="Nhr-229 coiled coil domain containing nccd-1">
    <location>
        <begin position="1"/>
        <end position="281"/>
    </location>
</feature>
<accession>Q9U2T3</accession>
<name>Y8CB_CAEEL</name>
<reference key="1">
    <citation type="journal article" date="1998" name="Science">
        <title>Genome sequence of the nematode C. elegans: a platform for investigating biology.</title>
        <authorList>
            <consortium name="The C. elegans sequencing consortium"/>
        </authorList>
    </citation>
    <scope>NUCLEOTIDE SEQUENCE [LARGE SCALE GENOMIC DNA]</scope>
    <source>
        <strain>Bristol N2</strain>
    </source>
</reference>